<proteinExistence type="inferred from homology"/>
<dbReference type="EC" id="7.3.2.5" evidence="1"/>
<dbReference type="EMBL" id="AL591688">
    <property type="protein sequence ID" value="CAC47508.1"/>
    <property type="molecule type" value="Genomic_DNA"/>
</dbReference>
<dbReference type="RefSeq" id="NP_387035.1">
    <property type="nucleotide sequence ID" value="NC_003047.1"/>
</dbReference>
<dbReference type="RefSeq" id="WP_003528799.1">
    <property type="nucleotide sequence ID" value="NC_003047.1"/>
</dbReference>
<dbReference type="SMR" id="Q92LU2"/>
<dbReference type="EnsemblBacteria" id="CAC47508">
    <property type="protein sequence ID" value="CAC47508"/>
    <property type="gene ID" value="SMc03198"/>
</dbReference>
<dbReference type="KEGG" id="sme:SMc03198"/>
<dbReference type="PATRIC" id="fig|266834.11.peg.4450"/>
<dbReference type="eggNOG" id="COG4148">
    <property type="taxonomic scope" value="Bacteria"/>
</dbReference>
<dbReference type="HOGENOM" id="CLU_000604_1_1_5"/>
<dbReference type="OrthoDB" id="9802264at2"/>
<dbReference type="Proteomes" id="UP000001976">
    <property type="component" value="Chromosome"/>
</dbReference>
<dbReference type="GO" id="GO:0005886">
    <property type="term" value="C:plasma membrane"/>
    <property type="evidence" value="ECO:0007669"/>
    <property type="project" value="UniProtKB-SubCell"/>
</dbReference>
<dbReference type="GO" id="GO:0015412">
    <property type="term" value="F:ABC-type molybdate transporter activity"/>
    <property type="evidence" value="ECO:0007669"/>
    <property type="project" value="UniProtKB-EC"/>
</dbReference>
<dbReference type="GO" id="GO:0005524">
    <property type="term" value="F:ATP binding"/>
    <property type="evidence" value="ECO:0007669"/>
    <property type="project" value="UniProtKB-KW"/>
</dbReference>
<dbReference type="GO" id="GO:0016887">
    <property type="term" value="F:ATP hydrolysis activity"/>
    <property type="evidence" value="ECO:0007669"/>
    <property type="project" value="InterPro"/>
</dbReference>
<dbReference type="Gene3D" id="2.40.50.100">
    <property type="match status" value="1"/>
</dbReference>
<dbReference type="Gene3D" id="3.40.50.300">
    <property type="entry name" value="P-loop containing nucleotide triphosphate hydrolases"/>
    <property type="match status" value="1"/>
</dbReference>
<dbReference type="InterPro" id="IPR003593">
    <property type="entry name" value="AAA+_ATPase"/>
</dbReference>
<dbReference type="InterPro" id="IPR003439">
    <property type="entry name" value="ABC_transporter-like_ATP-bd"/>
</dbReference>
<dbReference type="InterPro" id="IPR017871">
    <property type="entry name" value="ABC_transporter-like_CS"/>
</dbReference>
<dbReference type="InterPro" id="IPR008995">
    <property type="entry name" value="Mo/tungstate-bd_C_term_dom"/>
</dbReference>
<dbReference type="InterPro" id="IPR011868">
    <property type="entry name" value="ModC_ABC_ATP-bd"/>
</dbReference>
<dbReference type="InterPro" id="IPR050334">
    <property type="entry name" value="Molybdenum_import_ModC"/>
</dbReference>
<dbReference type="InterPro" id="IPR004606">
    <property type="entry name" value="Mop_domain"/>
</dbReference>
<dbReference type="InterPro" id="IPR027417">
    <property type="entry name" value="P-loop_NTPase"/>
</dbReference>
<dbReference type="InterPro" id="IPR005116">
    <property type="entry name" value="Transp-assoc_OB_typ1"/>
</dbReference>
<dbReference type="NCBIfam" id="TIGR02142">
    <property type="entry name" value="modC_ABC"/>
    <property type="match status" value="1"/>
</dbReference>
<dbReference type="PANTHER" id="PTHR43514">
    <property type="entry name" value="ABC TRANSPORTER I FAMILY MEMBER 10"/>
    <property type="match status" value="1"/>
</dbReference>
<dbReference type="PANTHER" id="PTHR43514:SF4">
    <property type="entry name" value="ABC TRANSPORTER I FAMILY MEMBER 10"/>
    <property type="match status" value="1"/>
</dbReference>
<dbReference type="Pfam" id="PF00005">
    <property type="entry name" value="ABC_tran"/>
    <property type="match status" value="1"/>
</dbReference>
<dbReference type="Pfam" id="PF03459">
    <property type="entry name" value="TOBE"/>
    <property type="match status" value="1"/>
</dbReference>
<dbReference type="SMART" id="SM00382">
    <property type="entry name" value="AAA"/>
    <property type="match status" value="1"/>
</dbReference>
<dbReference type="SUPFAM" id="SSF50331">
    <property type="entry name" value="MOP-like"/>
    <property type="match status" value="1"/>
</dbReference>
<dbReference type="SUPFAM" id="SSF52540">
    <property type="entry name" value="P-loop containing nucleoside triphosphate hydrolases"/>
    <property type="match status" value="1"/>
</dbReference>
<dbReference type="PROSITE" id="PS00211">
    <property type="entry name" value="ABC_TRANSPORTER_1"/>
    <property type="match status" value="1"/>
</dbReference>
<dbReference type="PROSITE" id="PS50893">
    <property type="entry name" value="ABC_TRANSPORTER_2"/>
    <property type="match status" value="1"/>
</dbReference>
<dbReference type="PROSITE" id="PS51241">
    <property type="entry name" value="MODC"/>
    <property type="match status" value="1"/>
</dbReference>
<dbReference type="PROSITE" id="PS51866">
    <property type="entry name" value="MOP"/>
    <property type="match status" value="1"/>
</dbReference>
<evidence type="ECO:0000255" key="1">
    <source>
        <dbReference type="HAMAP-Rule" id="MF_01705"/>
    </source>
</evidence>
<evidence type="ECO:0000255" key="2">
    <source>
        <dbReference type="PROSITE-ProRule" id="PRU01213"/>
    </source>
</evidence>
<keyword id="KW-0067">ATP-binding</keyword>
<keyword id="KW-0997">Cell inner membrane</keyword>
<keyword id="KW-1003">Cell membrane</keyword>
<keyword id="KW-0472">Membrane</keyword>
<keyword id="KW-0500">Molybdenum</keyword>
<keyword id="KW-0547">Nucleotide-binding</keyword>
<keyword id="KW-1185">Reference proteome</keyword>
<keyword id="KW-1278">Translocase</keyword>
<keyword id="KW-0813">Transport</keyword>
<reference key="1">
    <citation type="journal article" date="2001" name="Proc. Natl. Acad. Sci. U.S.A.">
        <title>Analysis of the chromosome sequence of the legume symbiont Sinorhizobium meliloti strain 1021.</title>
        <authorList>
            <person name="Capela D."/>
            <person name="Barloy-Hubler F."/>
            <person name="Gouzy J."/>
            <person name="Bothe G."/>
            <person name="Ampe F."/>
            <person name="Batut J."/>
            <person name="Boistard P."/>
            <person name="Becker A."/>
            <person name="Boutry M."/>
            <person name="Cadieu E."/>
            <person name="Dreano S."/>
            <person name="Gloux S."/>
            <person name="Godrie T."/>
            <person name="Goffeau A."/>
            <person name="Kahn D."/>
            <person name="Kiss E."/>
            <person name="Lelaure V."/>
            <person name="Masuy D."/>
            <person name="Pohl T."/>
            <person name="Portetelle D."/>
            <person name="Puehler A."/>
            <person name="Purnelle B."/>
            <person name="Ramsperger U."/>
            <person name="Renard C."/>
            <person name="Thebault P."/>
            <person name="Vandenbol M."/>
            <person name="Weidner S."/>
            <person name="Galibert F."/>
        </authorList>
    </citation>
    <scope>NUCLEOTIDE SEQUENCE [LARGE SCALE GENOMIC DNA]</scope>
    <source>
        <strain>1021</strain>
    </source>
</reference>
<reference key="2">
    <citation type="journal article" date="2001" name="Science">
        <title>The composite genome of the legume symbiont Sinorhizobium meliloti.</title>
        <authorList>
            <person name="Galibert F."/>
            <person name="Finan T.M."/>
            <person name="Long S.R."/>
            <person name="Puehler A."/>
            <person name="Abola P."/>
            <person name="Ampe F."/>
            <person name="Barloy-Hubler F."/>
            <person name="Barnett M.J."/>
            <person name="Becker A."/>
            <person name="Boistard P."/>
            <person name="Bothe G."/>
            <person name="Boutry M."/>
            <person name="Bowser L."/>
            <person name="Buhrmester J."/>
            <person name="Cadieu E."/>
            <person name="Capela D."/>
            <person name="Chain P."/>
            <person name="Cowie A."/>
            <person name="Davis R.W."/>
            <person name="Dreano S."/>
            <person name="Federspiel N.A."/>
            <person name="Fisher R.F."/>
            <person name="Gloux S."/>
            <person name="Godrie T."/>
            <person name="Goffeau A."/>
            <person name="Golding B."/>
            <person name="Gouzy J."/>
            <person name="Gurjal M."/>
            <person name="Hernandez-Lucas I."/>
            <person name="Hong A."/>
            <person name="Huizar L."/>
            <person name="Hyman R.W."/>
            <person name="Jones T."/>
            <person name="Kahn D."/>
            <person name="Kahn M.L."/>
            <person name="Kalman S."/>
            <person name="Keating D.H."/>
            <person name="Kiss E."/>
            <person name="Komp C."/>
            <person name="Lelaure V."/>
            <person name="Masuy D."/>
            <person name="Palm C."/>
            <person name="Peck M.C."/>
            <person name="Pohl T.M."/>
            <person name="Portetelle D."/>
            <person name="Purnelle B."/>
            <person name="Ramsperger U."/>
            <person name="Surzycki R."/>
            <person name="Thebault P."/>
            <person name="Vandenbol M."/>
            <person name="Vorhoelter F.J."/>
            <person name="Weidner S."/>
            <person name="Wells D.H."/>
            <person name="Wong K."/>
            <person name="Yeh K.-C."/>
            <person name="Batut J."/>
        </authorList>
    </citation>
    <scope>NUCLEOTIDE SEQUENCE [LARGE SCALE GENOMIC DNA]</scope>
    <source>
        <strain>1021</strain>
    </source>
</reference>
<name>MODC_RHIME</name>
<gene>
    <name evidence="1" type="primary">modC</name>
    <name type="ordered locus">R02929</name>
    <name type="ORF">SMc03198</name>
</gene>
<feature type="chain" id="PRO_0000092552" description="Molybdenum import ATP-binding protein ModC">
    <location>
        <begin position="1"/>
        <end position="357"/>
    </location>
</feature>
<feature type="domain" description="ABC transporter" evidence="1">
    <location>
        <begin position="1"/>
        <end position="233"/>
    </location>
</feature>
<feature type="domain" description="Mop" evidence="2">
    <location>
        <begin position="293"/>
        <end position="357"/>
    </location>
</feature>
<feature type="binding site" evidence="1">
    <location>
        <begin position="31"/>
        <end position="38"/>
    </location>
    <ligand>
        <name>ATP</name>
        <dbReference type="ChEBI" id="CHEBI:30616"/>
    </ligand>
</feature>
<accession>Q92LU2</accession>
<protein>
    <recommendedName>
        <fullName evidence="1">Molybdenum import ATP-binding protein ModC</fullName>
        <ecNumber evidence="1">7.3.2.5</ecNumber>
    </recommendedName>
</protein>
<comment type="function">
    <text evidence="1">Part of the ABC transporter complex ModABC involved in molybdenum import. Responsible for energy coupling to the transport system.</text>
</comment>
<comment type="catalytic activity">
    <reaction evidence="1">
        <text>molybdate(out) + ATP + H2O = molybdate(in) + ADP + phosphate + H(+)</text>
        <dbReference type="Rhea" id="RHEA:22020"/>
        <dbReference type="ChEBI" id="CHEBI:15377"/>
        <dbReference type="ChEBI" id="CHEBI:15378"/>
        <dbReference type="ChEBI" id="CHEBI:30616"/>
        <dbReference type="ChEBI" id="CHEBI:36264"/>
        <dbReference type="ChEBI" id="CHEBI:43474"/>
        <dbReference type="ChEBI" id="CHEBI:456216"/>
        <dbReference type="EC" id="7.3.2.5"/>
    </reaction>
</comment>
<comment type="subunit">
    <text evidence="1">The complex is composed of two ATP-binding proteins (ModC), two transmembrane proteins (ModB) and a solute-binding protein (ModA).</text>
</comment>
<comment type="subcellular location">
    <subcellularLocation>
        <location evidence="1">Cell inner membrane</location>
        <topology evidence="1">Peripheral membrane protein</topology>
    </subcellularLocation>
</comment>
<comment type="similarity">
    <text evidence="1">Belongs to the ABC transporter superfamily. Molybdate importer (TC 3.A.1.8) family.</text>
</comment>
<organism>
    <name type="scientific">Rhizobium meliloti (strain 1021)</name>
    <name type="common">Ensifer meliloti</name>
    <name type="synonym">Sinorhizobium meliloti</name>
    <dbReference type="NCBI Taxonomy" id="266834"/>
    <lineage>
        <taxon>Bacteria</taxon>
        <taxon>Pseudomonadati</taxon>
        <taxon>Pseudomonadota</taxon>
        <taxon>Alphaproteobacteria</taxon>
        <taxon>Hyphomicrobiales</taxon>
        <taxon>Rhizobiaceae</taxon>
        <taxon>Sinorhizobium/Ensifer group</taxon>
        <taxon>Sinorhizobium</taxon>
    </lineage>
</organism>
<sequence>MRLEVEARLRLGSFAIDAAFGSEGGVTALFGRSGSGKTSLVNIIAGLLRPDQGRVVLDGDTIADSERRLFTPVHRRRFAYVFQEARLFPHLSVRGNLAYGRWFAGAARSGPEFGRIVEMLGIGHLLDRMPSKLSGGERQRVAIGRALLAFPRLLLMDEPLAALDDARKAEILPYLERLRDETRIPIVYVSHSVAEVARLAERVVVMENGRVKASGKTAAVLNEPFPTSGPGRREAGALIEGIVDSHDEGHELTVVRAGDCLIRVPHLVAEPGQRLRLYIAARDVMLATRRPEGISALNVLPGTIVGLSSPRQGSIDVRVDCGGNVIAARVTTLSRDALDLRPGKQVHAVVKTVALDY</sequence>